<protein>
    <recommendedName>
        <fullName evidence="3">Naphthalene 1,2-dioxygenase system, ferredoxin component</fullName>
    </recommendedName>
</protein>
<gene>
    <name evidence="3" type="primary">doxA</name>
</gene>
<geneLocation type="plasmid">
    <name>unnamed</name>
</geneLocation>
<dbReference type="EMBL" id="M60405">
    <property type="protein sequence ID" value="AAA16124.1"/>
    <property type="molecule type" value="Genomic_DNA"/>
</dbReference>
<dbReference type="PIR" id="S27631">
    <property type="entry name" value="S27631"/>
</dbReference>
<dbReference type="SMR" id="P0A186"/>
<dbReference type="UniPathway" id="UPA00082"/>
<dbReference type="GO" id="GO:0051537">
    <property type="term" value="F:2 iron, 2 sulfur cluster binding"/>
    <property type="evidence" value="ECO:0000250"/>
    <property type="project" value="UniProtKB"/>
</dbReference>
<dbReference type="GO" id="GO:0046872">
    <property type="term" value="F:metal ion binding"/>
    <property type="evidence" value="ECO:0007669"/>
    <property type="project" value="UniProtKB-KW"/>
</dbReference>
<dbReference type="GO" id="GO:0009056">
    <property type="term" value="P:catabolic process"/>
    <property type="evidence" value="ECO:0007669"/>
    <property type="project" value="UniProtKB-KW"/>
</dbReference>
<dbReference type="CDD" id="cd03528">
    <property type="entry name" value="Rieske_RO_ferredoxin"/>
    <property type="match status" value="1"/>
</dbReference>
<dbReference type="FunFam" id="2.102.10.10:FF:000015">
    <property type="entry name" value="Naphthalene 1,2-dioxygenase ferredoxin component"/>
    <property type="match status" value="1"/>
</dbReference>
<dbReference type="Gene3D" id="2.102.10.10">
    <property type="entry name" value="Rieske [2Fe-2S] iron-sulphur domain"/>
    <property type="match status" value="1"/>
</dbReference>
<dbReference type="InterPro" id="IPR017941">
    <property type="entry name" value="Rieske_2Fe-2S"/>
</dbReference>
<dbReference type="InterPro" id="IPR036922">
    <property type="entry name" value="Rieske_2Fe-2S_sf"/>
</dbReference>
<dbReference type="PANTHER" id="PTHR21496:SF23">
    <property type="entry name" value="3-PHENYLPROPIONATE_CINNAMIC ACID DIOXYGENASE FERREDOXIN SUBUNIT"/>
    <property type="match status" value="1"/>
</dbReference>
<dbReference type="PANTHER" id="PTHR21496">
    <property type="entry name" value="FERREDOXIN-RELATED"/>
    <property type="match status" value="1"/>
</dbReference>
<dbReference type="Pfam" id="PF00355">
    <property type="entry name" value="Rieske"/>
    <property type="match status" value="1"/>
</dbReference>
<dbReference type="SUPFAM" id="SSF50022">
    <property type="entry name" value="ISP domain"/>
    <property type="match status" value="1"/>
</dbReference>
<dbReference type="PROSITE" id="PS51296">
    <property type="entry name" value="RIESKE"/>
    <property type="match status" value="1"/>
</dbReference>
<evidence type="ECO:0000250" key="1">
    <source>
        <dbReference type="UniProtKB" id="P0A185"/>
    </source>
</evidence>
<evidence type="ECO:0000255" key="2">
    <source>
        <dbReference type="PROSITE-ProRule" id="PRU00628"/>
    </source>
</evidence>
<evidence type="ECO:0000303" key="3">
    <source>
    </source>
</evidence>
<evidence type="ECO:0000305" key="4"/>
<evidence type="ECO:0000305" key="5">
    <source>
    </source>
</evidence>
<name>NDOA_PSEU8</name>
<accession>P0A186</accession>
<accession>O07829</accession>
<accession>P23082</accession>
<accession>Q52123</accession>
<organism>
    <name type="scientific">Pseudomonas sp. (strain C18)</name>
    <dbReference type="NCBI Taxonomy" id="69011"/>
    <lineage>
        <taxon>Bacteria</taxon>
        <taxon>Pseudomonadati</taxon>
        <taxon>Pseudomonadota</taxon>
    </lineage>
</organism>
<comment type="function">
    <text evidence="5">Component of the naphthalene dioxygenase (NDO) multicomponent enzyme system which catalyzes the incorporation of both atoms of molecular oxygen into naphthalene to form cis-(1R,2S)-dihydroxy-1,2-dihydronaphthalene. Functions as an intermediate electron transfer protein via a specific interaction with iron sulfur protein components (ISP) (DoxB and DoxD).</text>
</comment>
<comment type="cofactor">
    <cofactor evidence="1 2">
        <name>[2Fe-2S] cluster</name>
        <dbReference type="ChEBI" id="CHEBI:190135"/>
    </cofactor>
    <text evidence="1 2">Binds 1 [2Fe-2S] cluster per subunit.</text>
</comment>
<comment type="pathway">
    <text evidence="5">Aromatic compound metabolism; naphthalene degradation.</text>
</comment>
<comment type="subunit">
    <text evidence="5">The naphthalene dioxygenase (NDO) multicomponent enzyme system is composed of an electron transfer component and a dioxygenase component (iron sulfur protein (ISP)). The electron transfer component is composed of a ferredoxin reductase and a ferredoxin (DoxA), and the dioxygenase component is formed of a heterohexamer (trimer of heterodimers) of three large alpha subunits (DoxB) and three small beta subunits (DoxD).</text>
</comment>
<comment type="miscellaneous">
    <text evidence="5">Encoded on an unnamed 75 kb plasmid.</text>
</comment>
<comment type="similarity">
    <text evidence="4">Belongs to the bacterial ring-hydroxylating dioxygenase ferredoxin component family.</text>
</comment>
<sequence length="104" mass="11446">MTVKWIEAVALSDILEGDVLGVTVEGKELALYEVEGEIYATDNLCTHGSARMSDGYLEGREIECPLHQGRFDVCTGKALCAPVTQNIKTYPVKIENLRVMIDLS</sequence>
<proteinExistence type="evidence at protein level"/>
<keyword id="KW-0001">2Fe-2S</keyword>
<keyword id="KW-0058">Aromatic hydrocarbons catabolism</keyword>
<keyword id="KW-0249">Electron transport</keyword>
<keyword id="KW-0408">Iron</keyword>
<keyword id="KW-0411">Iron-sulfur</keyword>
<keyword id="KW-0479">Metal-binding</keyword>
<keyword id="KW-0614">Plasmid</keyword>
<keyword id="KW-0813">Transport</keyword>
<reference key="1">
    <citation type="journal article" date="1993" name="J. Bacteriol.">
        <title>Metabolism of dibenzothiophene and naphthalene in Pseudomonas strains: complete DNA sequence of an upper naphthalene catabolic pathway.</title>
        <authorList>
            <person name="Denome S.A."/>
            <person name="Stanley D.C."/>
            <person name="Olson E.S."/>
            <person name="Young K.D."/>
        </authorList>
    </citation>
    <scope>NUCLEOTIDE SEQUENCE [GENOMIC DNA]</scope>
    <scope>FUNCTION</scope>
    <scope>PATHWAY</scope>
    <scope>SUBUNIT</scope>
    <source>
        <strain>C18</strain>
        <plasmid>unnamed</plasmid>
    </source>
</reference>
<feature type="initiator methionine" description="Removed" evidence="1">
    <location>
        <position position="1"/>
    </location>
</feature>
<feature type="chain" id="PRO_0000201694" description="Naphthalene 1,2-dioxygenase system, ferredoxin component">
    <location>
        <begin position="2"/>
        <end position="104"/>
    </location>
</feature>
<feature type="domain" description="Rieske" evidence="2">
    <location>
        <begin position="6"/>
        <end position="101"/>
    </location>
</feature>
<feature type="binding site" evidence="1 2">
    <location>
        <position position="45"/>
    </location>
    <ligand>
        <name>[2Fe-2S] cluster</name>
        <dbReference type="ChEBI" id="CHEBI:190135"/>
    </ligand>
</feature>
<feature type="binding site" evidence="1 2">
    <location>
        <position position="47"/>
    </location>
    <ligand>
        <name>[2Fe-2S] cluster</name>
        <dbReference type="ChEBI" id="CHEBI:190135"/>
    </ligand>
</feature>
<feature type="binding site" evidence="1 2">
    <location>
        <position position="64"/>
    </location>
    <ligand>
        <name>[2Fe-2S] cluster</name>
        <dbReference type="ChEBI" id="CHEBI:190135"/>
    </ligand>
</feature>
<feature type="binding site" evidence="1 2">
    <location>
        <position position="67"/>
    </location>
    <ligand>
        <name>[2Fe-2S] cluster</name>
        <dbReference type="ChEBI" id="CHEBI:190135"/>
    </ligand>
</feature>